<proteinExistence type="inferred from homology"/>
<feature type="chain" id="PRO_0000238342" description="ATP synthase subunit alpha">
    <location>
        <begin position="1"/>
        <end position="510"/>
    </location>
</feature>
<feature type="binding site" evidence="2">
    <location>
        <begin position="169"/>
        <end position="176"/>
    </location>
    <ligand>
        <name>ATP</name>
        <dbReference type="ChEBI" id="CHEBI:30616"/>
    </ligand>
</feature>
<feature type="site" description="Required for activity" evidence="2">
    <location>
        <position position="371"/>
    </location>
</feature>
<organism>
    <name type="scientific">Rhodopseudomonas palustris (strain ATCC BAA-98 / CGA009)</name>
    <dbReference type="NCBI Taxonomy" id="258594"/>
    <lineage>
        <taxon>Bacteria</taxon>
        <taxon>Pseudomonadati</taxon>
        <taxon>Pseudomonadota</taxon>
        <taxon>Alphaproteobacteria</taxon>
        <taxon>Hyphomicrobiales</taxon>
        <taxon>Nitrobacteraceae</taxon>
        <taxon>Rhodopseudomonas</taxon>
    </lineage>
</organism>
<name>ATPA_RHOPA</name>
<dbReference type="EC" id="7.1.2.2" evidence="2"/>
<dbReference type="EMBL" id="BX572593">
    <property type="protein sequence ID" value="CAE25622.1"/>
    <property type="molecule type" value="Genomic_DNA"/>
</dbReference>
<dbReference type="RefSeq" id="WP_011155746.1">
    <property type="nucleotide sequence ID" value="NZ_CP116810.1"/>
</dbReference>
<dbReference type="SMR" id="Q6NDD0"/>
<dbReference type="STRING" id="258594.RPA0178"/>
<dbReference type="GeneID" id="66891183"/>
<dbReference type="eggNOG" id="COG0056">
    <property type="taxonomic scope" value="Bacteria"/>
</dbReference>
<dbReference type="HOGENOM" id="CLU_010091_2_1_5"/>
<dbReference type="PhylomeDB" id="Q6NDD0"/>
<dbReference type="GO" id="GO:0005886">
    <property type="term" value="C:plasma membrane"/>
    <property type="evidence" value="ECO:0007669"/>
    <property type="project" value="UniProtKB-SubCell"/>
</dbReference>
<dbReference type="GO" id="GO:0045259">
    <property type="term" value="C:proton-transporting ATP synthase complex"/>
    <property type="evidence" value="ECO:0007669"/>
    <property type="project" value="UniProtKB-KW"/>
</dbReference>
<dbReference type="GO" id="GO:0043531">
    <property type="term" value="F:ADP binding"/>
    <property type="evidence" value="ECO:0007669"/>
    <property type="project" value="TreeGrafter"/>
</dbReference>
<dbReference type="GO" id="GO:0005524">
    <property type="term" value="F:ATP binding"/>
    <property type="evidence" value="ECO:0007669"/>
    <property type="project" value="UniProtKB-UniRule"/>
</dbReference>
<dbReference type="GO" id="GO:0046933">
    <property type="term" value="F:proton-transporting ATP synthase activity, rotational mechanism"/>
    <property type="evidence" value="ECO:0007669"/>
    <property type="project" value="UniProtKB-UniRule"/>
</dbReference>
<dbReference type="CDD" id="cd18113">
    <property type="entry name" value="ATP-synt_F1_alpha_C"/>
    <property type="match status" value="1"/>
</dbReference>
<dbReference type="CDD" id="cd18116">
    <property type="entry name" value="ATP-synt_F1_alpha_N"/>
    <property type="match status" value="1"/>
</dbReference>
<dbReference type="CDD" id="cd01132">
    <property type="entry name" value="F1-ATPase_alpha_CD"/>
    <property type="match status" value="1"/>
</dbReference>
<dbReference type="FunFam" id="1.20.150.20:FF:000001">
    <property type="entry name" value="ATP synthase subunit alpha"/>
    <property type="match status" value="1"/>
</dbReference>
<dbReference type="FunFam" id="2.40.30.20:FF:000001">
    <property type="entry name" value="ATP synthase subunit alpha"/>
    <property type="match status" value="1"/>
</dbReference>
<dbReference type="FunFam" id="3.40.50.300:FF:002432">
    <property type="entry name" value="ATP synthase subunit alpha, mitochondrial"/>
    <property type="match status" value="1"/>
</dbReference>
<dbReference type="Gene3D" id="2.40.30.20">
    <property type="match status" value="1"/>
</dbReference>
<dbReference type="Gene3D" id="1.20.150.20">
    <property type="entry name" value="ATP synthase alpha/beta chain, C-terminal domain"/>
    <property type="match status" value="1"/>
</dbReference>
<dbReference type="Gene3D" id="3.40.50.300">
    <property type="entry name" value="P-loop containing nucleotide triphosphate hydrolases"/>
    <property type="match status" value="1"/>
</dbReference>
<dbReference type="HAMAP" id="MF_01346">
    <property type="entry name" value="ATP_synth_alpha_bact"/>
    <property type="match status" value="1"/>
</dbReference>
<dbReference type="InterPro" id="IPR023366">
    <property type="entry name" value="ATP_synth_asu-like_sf"/>
</dbReference>
<dbReference type="InterPro" id="IPR000793">
    <property type="entry name" value="ATP_synth_asu_C"/>
</dbReference>
<dbReference type="InterPro" id="IPR038376">
    <property type="entry name" value="ATP_synth_asu_C_sf"/>
</dbReference>
<dbReference type="InterPro" id="IPR033732">
    <property type="entry name" value="ATP_synth_F1_a_nt-bd_dom"/>
</dbReference>
<dbReference type="InterPro" id="IPR005294">
    <property type="entry name" value="ATP_synth_F1_asu"/>
</dbReference>
<dbReference type="InterPro" id="IPR020003">
    <property type="entry name" value="ATPase_a/bsu_AS"/>
</dbReference>
<dbReference type="InterPro" id="IPR004100">
    <property type="entry name" value="ATPase_F1/V1/A1_a/bsu_N"/>
</dbReference>
<dbReference type="InterPro" id="IPR036121">
    <property type="entry name" value="ATPase_F1/V1/A1_a/bsu_N_sf"/>
</dbReference>
<dbReference type="InterPro" id="IPR000194">
    <property type="entry name" value="ATPase_F1/V1/A1_a/bsu_nucl-bd"/>
</dbReference>
<dbReference type="InterPro" id="IPR027417">
    <property type="entry name" value="P-loop_NTPase"/>
</dbReference>
<dbReference type="NCBIfam" id="TIGR00962">
    <property type="entry name" value="atpA"/>
    <property type="match status" value="1"/>
</dbReference>
<dbReference type="NCBIfam" id="NF009884">
    <property type="entry name" value="PRK13343.1"/>
    <property type="match status" value="1"/>
</dbReference>
<dbReference type="PANTHER" id="PTHR48082">
    <property type="entry name" value="ATP SYNTHASE SUBUNIT ALPHA, MITOCHONDRIAL"/>
    <property type="match status" value="1"/>
</dbReference>
<dbReference type="PANTHER" id="PTHR48082:SF2">
    <property type="entry name" value="ATP SYNTHASE SUBUNIT ALPHA, MITOCHONDRIAL"/>
    <property type="match status" value="1"/>
</dbReference>
<dbReference type="Pfam" id="PF00006">
    <property type="entry name" value="ATP-synt_ab"/>
    <property type="match status" value="1"/>
</dbReference>
<dbReference type="Pfam" id="PF00306">
    <property type="entry name" value="ATP-synt_ab_C"/>
    <property type="match status" value="1"/>
</dbReference>
<dbReference type="Pfam" id="PF02874">
    <property type="entry name" value="ATP-synt_ab_N"/>
    <property type="match status" value="1"/>
</dbReference>
<dbReference type="PIRSF" id="PIRSF039088">
    <property type="entry name" value="F_ATPase_subunit_alpha"/>
    <property type="match status" value="1"/>
</dbReference>
<dbReference type="SUPFAM" id="SSF47917">
    <property type="entry name" value="C-terminal domain of alpha and beta subunits of F1 ATP synthase"/>
    <property type="match status" value="1"/>
</dbReference>
<dbReference type="SUPFAM" id="SSF50615">
    <property type="entry name" value="N-terminal domain of alpha and beta subunits of F1 ATP synthase"/>
    <property type="match status" value="1"/>
</dbReference>
<dbReference type="SUPFAM" id="SSF52540">
    <property type="entry name" value="P-loop containing nucleoside triphosphate hydrolases"/>
    <property type="match status" value="1"/>
</dbReference>
<dbReference type="PROSITE" id="PS00152">
    <property type="entry name" value="ATPASE_ALPHA_BETA"/>
    <property type="match status" value="1"/>
</dbReference>
<sequence>MDIRAAEISAILKDQIKNFGQEAEVSEVGQVLSVGDGIARVYGLDNVLAGEMVEFENGTRGMALNLETDNVGVVIFGADREIKEGQTVKRTRSIVDAPVGKGLLGRVVDALGNPIDGKGPIQAVERKRVDVKAPGIIPRKSVHEPMATGLKSIDALIPIGRGQRELIIGDRQTGKTAIALDTILNQKPLNVEGAPESQKLYCVYVAVGQKRSTVAQFVKVLEEQGALEYSVVVAATASDPAPMQYIAPFTGCTIGEYFRDNGMHAVIIYDDLSKQAVAYRQMSLLLRRPPGREAYPGDVFYLHSRLLERAAKLNDEQGNGSLTALPVIETQANDVSAYIPTNVISITDGQIFLETDLFFQGIRPAVNVGLSVSRVGSSAQTKAMKKVAGKIKGELAQYREMAAFAQFGSDLDAATQRLLNRGSRLTELLKQPQFSPLKMEEQVCVIWAGTNGYLDALPLNKVRAFEDGLLALLRGKESGILEAIRTSRDLSDDTAAKLKAVVESYAKTFA</sequence>
<keyword id="KW-0066">ATP synthesis</keyword>
<keyword id="KW-0067">ATP-binding</keyword>
<keyword id="KW-0997">Cell inner membrane</keyword>
<keyword id="KW-1003">Cell membrane</keyword>
<keyword id="KW-0139">CF(1)</keyword>
<keyword id="KW-0375">Hydrogen ion transport</keyword>
<keyword id="KW-0406">Ion transport</keyword>
<keyword id="KW-0472">Membrane</keyword>
<keyword id="KW-0547">Nucleotide-binding</keyword>
<keyword id="KW-1278">Translocase</keyword>
<keyword id="KW-0813">Transport</keyword>
<gene>
    <name evidence="2" type="primary">atpA</name>
    <name type="ordered locus">RPA0178</name>
</gene>
<evidence type="ECO:0000250" key="1"/>
<evidence type="ECO:0000255" key="2">
    <source>
        <dbReference type="HAMAP-Rule" id="MF_01346"/>
    </source>
</evidence>
<reference key="1">
    <citation type="journal article" date="2004" name="Nat. Biotechnol.">
        <title>Complete genome sequence of the metabolically versatile photosynthetic bacterium Rhodopseudomonas palustris.</title>
        <authorList>
            <person name="Larimer F.W."/>
            <person name="Chain P."/>
            <person name="Hauser L."/>
            <person name="Lamerdin J.E."/>
            <person name="Malfatti S."/>
            <person name="Do L."/>
            <person name="Land M.L."/>
            <person name="Pelletier D.A."/>
            <person name="Beatty J.T."/>
            <person name="Lang A.S."/>
            <person name="Tabita F.R."/>
            <person name="Gibson J.L."/>
            <person name="Hanson T.E."/>
            <person name="Bobst C."/>
            <person name="Torres y Torres J.L."/>
            <person name="Peres C."/>
            <person name="Harrison F.H."/>
            <person name="Gibson J."/>
            <person name="Harwood C.S."/>
        </authorList>
    </citation>
    <scope>NUCLEOTIDE SEQUENCE [LARGE SCALE GENOMIC DNA]</scope>
    <source>
        <strain>ATCC BAA-98 / CGA009</strain>
    </source>
</reference>
<accession>Q6NDD0</accession>
<protein>
    <recommendedName>
        <fullName evidence="2">ATP synthase subunit alpha</fullName>
        <ecNumber evidence="2">7.1.2.2</ecNumber>
    </recommendedName>
    <alternativeName>
        <fullName evidence="2">ATP synthase F1 sector subunit alpha</fullName>
    </alternativeName>
    <alternativeName>
        <fullName evidence="2">F-ATPase subunit alpha</fullName>
    </alternativeName>
</protein>
<comment type="function">
    <text evidence="2">Produces ATP from ADP in the presence of a proton gradient across the membrane. The alpha chain is a regulatory subunit.</text>
</comment>
<comment type="catalytic activity">
    <reaction evidence="2">
        <text>ATP + H2O + 4 H(+)(in) = ADP + phosphate + 5 H(+)(out)</text>
        <dbReference type="Rhea" id="RHEA:57720"/>
        <dbReference type="ChEBI" id="CHEBI:15377"/>
        <dbReference type="ChEBI" id="CHEBI:15378"/>
        <dbReference type="ChEBI" id="CHEBI:30616"/>
        <dbReference type="ChEBI" id="CHEBI:43474"/>
        <dbReference type="ChEBI" id="CHEBI:456216"/>
        <dbReference type="EC" id="7.1.2.2"/>
    </reaction>
</comment>
<comment type="subunit">
    <text evidence="1">F-type ATPases have 2 components, CF(1) - the catalytic core - and CF(0) - the membrane proton channel. CF(1) has five subunits: alpha(3), beta(3), gamma(1), delta(1), epsilon(1). CF(0) has four main subunits: a(1), b(1), b'(1) and c(9-12) (By similarity).</text>
</comment>
<comment type="subcellular location">
    <subcellularLocation>
        <location evidence="2">Cell inner membrane</location>
        <topology evidence="2">Peripheral membrane protein</topology>
    </subcellularLocation>
</comment>
<comment type="similarity">
    <text evidence="2">Belongs to the ATPase alpha/beta chains family.</text>
</comment>